<protein>
    <recommendedName>
        <fullName evidence="1">Glutamyl-tRNA reductase</fullName>
        <shortName evidence="1">GluTR</shortName>
        <ecNumber evidence="1">1.2.1.70</ecNumber>
    </recommendedName>
</protein>
<accession>A2CAB8</accession>
<organism>
    <name type="scientific">Prochlorococcus marinus (strain MIT 9303)</name>
    <dbReference type="NCBI Taxonomy" id="59922"/>
    <lineage>
        <taxon>Bacteria</taxon>
        <taxon>Bacillati</taxon>
        <taxon>Cyanobacteriota</taxon>
        <taxon>Cyanophyceae</taxon>
        <taxon>Synechococcales</taxon>
        <taxon>Prochlorococcaceae</taxon>
        <taxon>Prochlorococcus</taxon>
    </lineage>
</organism>
<sequence length="436" mass="48166">MHIAVVGLSHRTAPVEIREKLSIPEQTMETSLQTLRGNDQVLEVSILSTCNRLEIYTLVRHPERGISAISDFLGQHSGLAAEDLSPHLFNFHHDEAVAHLMRVAAGLDSLVLGEGQILSQVKKMVRLGQEHKSMGPILNRLLTQAVSTGKRVRSETNLGTGAVSISSAAVELAQLKLGQAQGEDQLMTLESELVAVVGAGRMSRLLLQHLQAKGCSGVMLLNRTRQRAEDLSADFPELPVECRPLDDLNHCLSTCSLVFTSTAADDPIVDASLLKQLKRRSFLRLIDIGVPRNIASDVVDLPGVESHDVDDLHEVVSRNQEARQQMAKEAEVVLQEETRLFLEWWDSLEAVPTINRLRATLEAIRAEELQKALSRMGPDFSARERKVVEALSKGIINKILHTPVTQLRAPQARQERQQALRVVACLFELDPPLEDG</sequence>
<gene>
    <name evidence="1" type="primary">hemA</name>
    <name type="ordered locus">P9303_16841</name>
</gene>
<proteinExistence type="inferred from homology"/>
<reference key="1">
    <citation type="journal article" date="2007" name="PLoS Genet.">
        <title>Patterns and implications of gene gain and loss in the evolution of Prochlorococcus.</title>
        <authorList>
            <person name="Kettler G.C."/>
            <person name="Martiny A.C."/>
            <person name="Huang K."/>
            <person name="Zucker J."/>
            <person name="Coleman M.L."/>
            <person name="Rodrigue S."/>
            <person name="Chen F."/>
            <person name="Lapidus A."/>
            <person name="Ferriera S."/>
            <person name="Johnson J."/>
            <person name="Steglich C."/>
            <person name="Church G.M."/>
            <person name="Richardson P."/>
            <person name="Chisholm S.W."/>
        </authorList>
    </citation>
    <scope>NUCLEOTIDE SEQUENCE [LARGE SCALE GENOMIC DNA]</scope>
    <source>
        <strain>MIT 9303</strain>
    </source>
</reference>
<name>HEM1_PROM3</name>
<comment type="function">
    <text evidence="1">Catalyzes the NADPH-dependent reduction of glutamyl-tRNA(Glu) to glutamate 1-semialdehyde (GSA).</text>
</comment>
<comment type="catalytic activity">
    <reaction evidence="1">
        <text>(S)-4-amino-5-oxopentanoate + tRNA(Glu) + NADP(+) = L-glutamyl-tRNA(Glu) + NADPH + H(+)</text>
        <dbReference type="Rhea" id="RHEA:12344"/>
        <dbReference type="Rhea" id="RHEA-COMP:9663"/>
        <dbReference type="Rhea" id="RHEA-COMP:9680"/>
        <dbReference type="ChEBI" id="CHEBI:15378"/>
        <dbReference type="ChEBI" id="CHEBI:57501"/>
        <dbReference type="ChEBI" id="CHEBI:57783"/>
        <dbReference type="ChEBI" id="CHEBI:58349"/>
        <dbReference type="ChEBI" id="CHEBI:78442"/>
        <dbReference type="ChEBI" id="CHEBI:78520"/>
        <dbReference type="EC" id="1.2.1.70"/>
    </reaction>
</comment>
<comment type="pathway">
    <text evidence="1">Porphyrin-containing compound metabolism; protoporphyrin-IX biosynthesis; 5-aminolevulinate from L-glutamyl-tRNA(Glu): step 1/2.</text>
</comment>
<comment type="pathway">
    <text evidence="1">Porphyrin-containing compound metabolism; chlorophyll biosynthesis.</text>
</comment>
<comment type="subunit">
    <text evidence="1">Homodimer.</text>
</comment>
<comment type="domain">
    <text evidence="1">Possesses an unusual extended V-shaped dimeric structure with each monomer consisting of three distinct domains arranged along a curved 'spinal' alpha-helix. The N-terminal catalytic domain specifically recognizes the glutamate moiety of the substrate. The second domain is the NADPH-binding domain, and the third C-terminal domain is responsible for dimerization.</text>
</comment>
<comment type="miscellaneous">
    <text evidence="1">During catalysis, the active site Cys acts as a nucleophile attacking the alpha-carbonyl group of tRNA-bound glutamate with the formation of a thioester intermediate between enzyme and glutamate, and the concomitant release of tRNA(Glu). The thioester intermediate is finally reduced by direct hydride transfer from NADPH, to form the product GSA.</text>
</comment>
<comment type="similarity">
    <text evidence="1">Belongs to the glutamyl-tRNA reductase family.</text>
</comment>
<evidence type="ECO:0000255" key="1">
    <source>
        <dbReference type="HAMAP-Rule" id="MF_00087"/>
    </source>
</evidence>
<keyword id="KW-0149">Chlorophyll biosynthesis</keyword>
<keyword id="KW-0521">NADP</keyword>
<keyword id="KW-0560">Oxidoreductase</keyword>
<keyword id="KW-0627">Porphyrin biosynthesis</keyword>
<feature type="chain" id="PRO_1000004663" description="Glutamyl-tRNA reductase">
    <location>
        <begin position="1"/>
        <end position="436"/>
    </location>
</feature>
<feature type="active site" description="Nucleophile" evidence="1">
    <location>
        <position position="50"/>
    </location>
</feature>
<feature type="binding site" evidence="1">
    <location>
        <begin position="49"/>
        <end position="52"/>
    </location>
    <ligand>
        <name>substrate</name>
    </ligand>
</feature>
<feature type="binding site" evidence="1">
    <location>
        <position position="109"/>
    </location>
    <ligand>
        <name>substrate</name>
    </ligand>
</feature>
<feature type="binding site" evidence="1">
    <location>
        <begin position="114"/>
        <end position="116"/>
    </location>
    <ligand>
        <name>substrate</name>
    </ligand>
</feature>
<feature type="binding site" evidence="1">
    <location>
        <position position="120"/>
    </location>
    <ligand>
        <name>substrate</name>
    </ligand>
</feature>
<feature type="binding site" evidence="1">
    <location>
        <begin position="198"/>
        <end position="203"/>
    </location>
    <ligand>
        <name>NADP(+)</name>
        <dbReference type="ChEBI" id="CHEBI:58349"/>
    </ligand>
</feature>
<feature type="site" description="Important for activity" evidence="1">
    <location>
        <position position="99"/>
    </location>
</feature>
<dbReference type="EC" id="1.2.1.70" evidence="1"/>
<dbReference type="EMBL" id="CP000554">
    <property type="protein sequence ID" value="ABM78428.1"/>
    <property type="molecule type" value="Genomic_DNA"/>
</dbReference>
<dbReference type="RefSeq" id="WP_011826316.1">
    <property type="nucleotide sequence ID" value="NC_008820.1"/>
</dbReference>
<dbReference type="SMR" id="A2CAB8"/>
<dbReference type="STRING" id="59922.P9303_16841"/>
<dbReference type="KEGG" id="pmf:P9303_16841"/>
<dbReference type="HOGENOM" id="CLU_035113_2_1_3"/>
<dbReference type="BioCyc" id="PMAR59922:G1G80-1463-MONOMER"/>
<dbReference type="UniPathway" id="UPA00251">
    <property type="reaction ID" value="UER00316"/>
</dbReference>
<dbReference type="UniPathway" id="UPA00668"/>
<dbReference type="Proteomes" id="UP000002274">
    <property type="component" value="Chromosome"/>
</dbReference>
<dbReference type="GO" id="GO:0008883">
    <property type="term" value="F:glutamyl-tRNA reductase activity"/>
    <property type="evidence" value="ECO:0007669"/>
    <property type="project" value="UniProtKB-UniRule"/>
</dbReference>
<dbReference type="GO" id="GO:0050661">
    <property type="term" value="F:NADP binding"/>
    <property type="evidence" value="ECO:0007669"/>
    <property type="project" value="InterPro"/>
</dbReference>
<dbReference type="GO" id="GO:0015995">
    <property type="term" value="P:chlorophyll biosynthetic process"/>
    <property type="evidence" value="ECO:0007669"/>
    <property type="project" value="UniProtKB-UniRule"/>
</dbReference>
<dbReference type="GO" id="GO:0006782">
    <property type="term" value="P:protoporphyrinogen IX biosynthetic process"/>
    <property type="evidence" value="ECO:0007669"/>
    <property type="project" value="UniProtKB-UniRule"/>
</dbReference>
<dbReference type="CDD" id="cd05213">
    <property type="entry name" value="NAD_bind_Glutamyl_tRNA_reduct"/>
    <property type="match status" value="1"/>
</dbReference>
<dbReference type="FunFam" id="3.30.460.30:FF:000001">
    <property type="entry name" value="Glutamyl-tRNA reductase"/>
    <property type="match status" value="1"/>
</dbReference>
<dbReference type="FunFam" id="3.40.50.720:FF:000031">
    <property type="entry name" value="Glutamyl-tRNA reductase"/>
    <property type="match status" value="1"/>
</dbReference>
<dbReference type="Gene3D" id="3.30.460.30">
    <property type="entry name" value="Glutamyl-tRNA reductase, N-terminal domain"/>
    <property type="match status" value="1"/>
</dbReference>
<dbReference type="Gene3D" id="3.40.50.720">
    <property type="entry name" value="NAD(P)-binding Rossmann-like Domain"/>
    <property type="match status" value="1"/>
</dbReference>
<dbReference type="HAMAP" id="MF_00087">
    <property type="entry name" value="Glu_tRNA_reductase"/>
    <property type="match status" value="1"/>
</dbReference>
<dbReference type="InterPro" id="IPR000343">
    <property type="entry name" value="4pyrrol_synth_GluRdtase"/>
</dbReference>
<dbReference type="InterPro" id="IPR015896">
    <property type="entry name" value="4pyrrol_synth_GluRdtase_dimer"/>
</dbReference>
<dbReference type="InterPro" id="IPR015895">
    <property type="entry name" value="4pyrrol_synth_GluRdtase_N"/>
</dbReference>
<dbReference type="InterPro" id="IPR018214">
    <property type="entry name" value="GluRdtase_CS"/>
</dbReference>
<dbReference type="InterPro" id="IPR036453">
    <property type="entry name" value="GluRdtase_dimer_dom_sf"/>
</dbReference>
<dbReference type="InterPro" id="IPR036343">
    <property type="entry name" value="GluRdtase_N_sf"/>
</dbReference>
<dbReference type="InterPro" id="IPR036291">
    <property type="entry name" value="NAD(P)-bd_dom_sf"/>
</dbReference>
<dbReference type="InterPro" id="IPR006151">
    <property type="entry name" value="Shikm_DH/Glu-tRNA_Rdtase"/>
</dbReference>
<dbReference type="NCBIfam" id="TIGR01035">
    <property type="entry name" value="hemA"/>
    <property type="match status" value="1"/>
</dbReference>
<dbReference type="NCBIfam" id="NF000744">
    <property type="entry name" value="PRK00045.1-3"/>
    <property type="match status" value="1"/>
</dbReference>
<dbReference type="PANTHER" id="PTHR43120">
    <property type="entry name" value="GLUTAMYL-TRNA REDUCTASE 1, CHLOROPLASTIC"/>
    <property type="match status" value="1"/>
</dbReference>
<dbReference type="PANTHER" id="PTHR43120:SF1">
    <property type="entry name" value="GLUTAMYL-TRNA REDUCTASE 1, CHLOROPLASTIC"/>
    <property type="match status" value="1"/>
</dbReference>
<dbReference type="Pfam" id="PF00745">
    <property type="entry name" value="GlutR_dimer"/>
    <property type="match status" value="1"/>
</dbReference>
<dbReference type="Pfam" id="PF05201">
    <property type="entry name" value="GlutR_N"/>
    <property type="match status" value="1"/>
</dbReference>
<dbReference type="Pfam" id="PF01488">
    <property type="entry name" value="Shikimate_DH"/>
    <property type="match status" value="1"/>
</dbReference>
<dbReference type="PIRSF" id="PIRSF000445">
    <property type="entry name" value="4pyrrol_synth_GluRdtase"/>
    <property type="match status" value="1"/>
</dbReference>
<dbReference type="SUPFAM" id="SSF69742">
    <property type="entry name" value="Glutamyl tRNA-reductase catalytic, N-terminal domain"/>
    <property type="match status" value="1"/>
</dbReference>
<dbReference type="SUPFAM" id="SSF69075">
    <property type="entry name" value="Glutamyl tRNA-reductase dimerization domain"/>
    <property type="match status" value="1"/>
</dbReference>
<dbReference type="SUPFAM" id="SSF51735">
    <property type="entry name" value="NAD(P)-binding Rossmann-fold domains"/>
    <property type="match status" value="1"/>
</dbReference>
<dbReference type="PROSITE" id="PS00747">
    <property type="entry name" value="GLUTR"/>
    <property type="match status" value="1"/>
</dbReference>